<accession>A0A023G6B6</accession>
<evidence type="ECO:0000250" key="1">
    <source>
        <dbReference type="UniProtKB" id="P0C8E7"/>
    </source>
</evidence>
<evidence type="ECO:0000255" key="2"/>
<evidence type="ECO:0000255" key="3">
    <source>
        <dbReference type="PROSITE-ProRule" id="PRU00498"/>
    </source>
</evidence>
<evidence type="ECO:0000269" key="4">
    <source>
    </source>
</evidence>
<evidence type="ECO:0000303" key="5">
    <source>
    </source>
</evidence>
<evidence type="ECO:0000305" key="6"/>
<evidence type="ECO:0000312" key="7">
    <source>
        <dbReference type="EMBL" id="JAC29349.1"/>
    </source>
</evidence>
<sequence length="116" mass="13174">MARNWSFRVIFVSAMWCALLKFATLEEPKDGYDYTEGCPFVVLGNGTHAKPAGCSHLCNGAPETLDDNMECYNVTEEVAKRMTPDIPYTCWLGWCSKGECKRDNRTEVCYRGSERE</sequence>
<protein>
    <recommendedName>
        <fullName evidence="5">Evasin P1180</fullName>
    </recommendedName>
</protein>
<keyword id="KW-1015">Disulfide bond</keyword>
<keyword id="KW-0325">Glycoprotein</keyword>
<keyword id="KW-0964">Secreted</keyword>
<keyword id="KW-0732">Signal</keyword>
<name>E1180_AMBTT</name>
<dbReference type="EMBL" id="GBBM01006069">
    <property type="protein sequence ID" value="JAC29349.1"/>
    <property type="status" value="ALT_INIT"/>
    <property type="molecule type" value="mRNA"/>
</dbReference>
<dbReference type="SMR" id="A0A023G6B6"/>
<dbReference type="GO" id="GO:0005576">
    <property type="term" value="C:extracellular region"/>
    <property type="evidence" value="ECO:0007669"/>
    <property type="project" value="UniProtKB-SubCell"/>
</dbReference>
<dbReference type="GO" id="GO:0019957">
    <property type="term" value="F:C-C chemokine binding"/>
    <property type="evidence" value="ECO:0000314"/>
    <property type="project" value="UniProtKB"/>
</dbReference>
<dbReference type="Gene3D" id="2.30.130.100">
    <property type="match status" value="1"/>
</dbReference>
<dbReference type="InterPro" id="IPR045797">
    <property type="entry name" value="EVA_Class_A"/>
</dbReference>
<dbReference type="Pfam" id="PF19429">
    <property type="entry name" value="EVA_Class_A"/>
    <property type="match status" value="1"/>
</dbReference>
<reference evidence="7" key="1">
    <citation type="journal article" date="2014" name="Parasit. Vectors">
        <title>The sialotranscriptome of Amblyomma triste, Amblyomma parvum and Amblyomma cajennense ticks, uncovered by 454-based RNA-seq.</title>
        <authorList>
            <person name="Garcia G.R."/>
            <person name="Gardinassi L.G."/>
            <person name="Ribeiro J.M."/>
            <person name="Anatriello E."/>
            <person name="Ferreira B.R."/>
            <person name="Moreira H.N."/>
            <person name="Mafra C."/>
            <person name="Martins M.M."/>
            <person name="Szabo M.P."/>
            <person name="de Miranda-Santos I.K."/>
            <person name="Maruyama S.R."/>
        </authorList>
    </citation>
    <scope>NUCLEOTIDE SEQUENCE [LARGE SCALE MRNA]</scope>
    <source>
        <strain evidence="7">Mato Grasso do Sul</strain>
        <tissue evidence="7">Salivary gland</tissue>
    </source>
</reference>
<reference evidence="6" key="2">
    <citation type="journal article" date="2017" name="Sci. Rep.">
        <title>Yeast surface display identifies a family of evasins from ticks with novel polyvalent CC chemokine-binding activities.</title>
        <authorList>
            <person name="Singh K."/>
            <person name="Davies G."/>
            <person name="Alenazi Y."/>
            <person name="Eaton J.R.O."/>
            <person name="Kawamura A."/>
            <person name="Bhattacharya S."/>
        </authorList>
    </citation>
    <scope>FUNCTION</scope>
</reference>
<organism>
    <name type="scientific">Amblyomma triste</name>
    <name type="common">Neotropical tick</name>
    <dbReference type="NCBI Taxonomy" id="251400"/>
    <lineage>
        <taxon>Eukaryota</taxon>
        <taxon>Metazoa</taxon>
        <taxon>Ecdysozoa</taxon>
        <taxon>Arthropoda</taxon>
        <taxon>Chelicerata</taxon>
        <taxon>Arachnida</taxon>
        <taxon>Acari</taxon>
        <taxon>Parasitiformes</taxon>
        <taxon>Ixodida</taxon>
        <taxon>Ixodoidea</taxon>
        <taxon>Ixodidae</taxon>
        <taxon>Amblyomminae</taxon>
        <taxon>Amblyomma</taxon>
    </lineage>
</organism>
<feature type="signal peptide" evidence="2">
    <location>
        <begin position="1"/>
        <end position="25"/>
    </location>
</feature>
<feature type="chain" id="PRO_0000451310" description="Evasin P1180" evidence="2">
    <location>
        <begin position="26"/>
        <end position="116"/>
    </location>
</feature>
<feature type="glycosylation site" description="N-linked (GlcNAc...) asparagine" evidence="3">
    <location>
        <position position="45"/>
    </location>
</feature>
<feature type="glycosylation site" description="N-linked (GlcNAc...) asparagine" evidence="3">
    <location>
        <position position="73"/>
    </location>
</feature>
<feature type="glycosylation site" description="N-linked (GlcNAc...) asparagine" evidence="3">
    <location>
        <position position="104"/>
    </location>
</feature>
<feature type="disulfide bond" evidence="1">
    <location>
        <begin position="38"/>
        <end position="58"/>
    </location>
</feature>
<feature type="disulfide bond" evidence="1">
    <location>
        <begin position="54"/>
        <end position="95"/>
    </location>
</feature>
<feature type="disulfide bond" evidence="1">
    <location>
        <begin position="71"/>
        <end position="100"/>
    </location>
</feature>
<feature type="disulfide bond" evidence="1">
    <location>
        <begin position="90"/>
        <end position="109"/>
    </location>
</feature>
<proteinExistence type="inferred from homology"/>
<comment type="function">
    <text evidence="4">Salivary chemokine-binding protein which binds to host chemokines CCL2, CCL3, CCL4, CCL8 and CCL18.</text>
</comment>
<comment type="subcellular location">
    <subcellularLocation>
        <location evidence="6">Secreted</location>
    </subcellularLocation>
</comment>
<comment type="sequence caution" evidence="6">
    <conflict type="erroneous initiation">
        <sequence resource="EMBL-CDS" id="JAC29349"/>
    </conflict>
    <text>Extended N-terminus.</text>
</comment>